<accession>P50215</accession>
<sequence length="406" mass="45483">MAKIKVKNPVVEIDGDEMTRIIWEWIRERLILPYLDVDLKYYDLSVEKRDETSDQITIDAANAIKEYGVGVKCATITPDEARVEEFGLKKMWKSPNGTIRNILGGVVFREPIVIKNVPRLVPGWTDPIVVGRHAFGDQYKATDFKVPGAGTLTMKWVGTNGEELEYEVFEFPSAGVAMGMYNLDESIRDFAKASFNYGLNRGWPVYLSTKNTILKAYDGRFKDLFQEVFDAEFADKFKAAGIVYEHRLIDDMVASALKWSGKFVWACKNYDGDVQSDTVAQGFGSLGLMTSVLLSPDGKTVEAEAAHGTVTRHYRQHQQGKATSTNPIASIFAWTQGLSFRGKFDDTPDVVKFAETLEQVCIKTVEGGAMTKDLALLIGPDQAWMTTEQFFEAIRVNLEAEMAKWA</sequence>
<keyword id="KW-0329">Glyoxylate bypass</keyword>
<keyword id="KW-0460">Magnesium</keyword>
<keyword id="KW-0464">Manganese</keyword>
<keyword id="KW-0479">Metal-binding</keyword>
<keyword id="KW-0521">NADP</keyword>
<keyword id="KW-0560">Oxidoreductase</keyword>
<keyword id="KW-0816">Tricarboxylic acid cycle</keyword>
<name>IDH_SPHYA</name>
<organism>
    <name type="scientific">Sphingobium yanoikuyae</name>
    <name type="common">Sphingomonas yanoikuyae</name>
    <dbReference type="NCBI Taxonomy" id="13690"/>
    <lineage>
        <taxon>Bacteria</taxon>
        <taxon>Pseudomonadati</taxon>
        <taxon>Pseudomonadota</taxon>
        <taxon>Alphaproteobacteria</taxon>
        <taxon>Sphingomonadales</taxon>
        <taxon>Sphingomonadaceae</taxon>
        <taxon>Sphingobium</taxon>
    </lineage>
</organism>
<evidence type="ECO:0000250" key="1">
    <source>
        <dbReference type="UniProtKB" id="P08200"/>
    </source>
</evidence>
<evidence type="ECO:0000250" key="2">
    <source>
        <dbReference type="UniProtKB" id="P9WKL1"/>
    </source>
</evidence>
<evidence type="ECO:0000305" key="3"/>
<protein>
    <recommendedName>
        <fullName>Isocitrate dehydrogenase [NADP]</fullName>
        <shortName>IDH</shortName>
        <ecNumber evidence="1">1.1.1.42</ecNumber>
    </recommendedName>
    <alternativeName>
        <fullName>IDP</fullName>
    </alternativeName>
    <alternativeName>
        <fullName>NADP(+)-specific ICDH</fullName>
    </alternativeName>
    <alternativeName>
        <fullName>Oxalosuccinate decarboxylase</fullName>
    </alternativeName>
</protein>
<reference key="1">
    <citation type="journal article" date="1996" name="Gene">
        <title>Sequence and expression of an isocitrate dehydrogenase-encoding gene from a polycyclic aromatic hydrocarbon oxidizer, Sphingomonas yanoikuyae B1.</title>
        <authorList>
            <person name="Wang Y."/>
            <person name="Lau P.C.K."/>
        </authorList>
    </citation>
    <scope>NUCLEOTIDE SEQUENCE [GENOMIC DNA]</scope>
    <source>
        <strain>DSM 6900 / JCM 10274 / B1</strain>
    </source>
</reference>
<comment type="function">
    <text evidence="1">Catalyzes the oxidative decarboxylation of isocitrate to 2-oxoglutarate and carbon dioxide with the concomitant reduction of NADP(+).</text>
</comment>
<comment type="catalytic activity">
    <reaction evidence="1">
        <text>D-threo-isocitrate + NADP(+) = 2-oxoglutarate + CO2 + NADPH</text>
        <dbReference type="Rhea" id="RHEA:19629"/>
        <dbReference type="ChEBI" id="CHEBI:15562"/>
        <dbReference type="ChEBI" id="CHEBI:16526"/>
        <dbReference type="ChEBI" id="CHEBI:16810"/>
        <dbReference type="ChEBI" id="CHEBI:57783"/>
        <dbReference type="ChEBI" id="CHEBI:58349"/>
        <dbReference type="EC" id="1.1.1.42"/>
    </reaction>
</comment>
<comment type="cofactor">
    <cofactor evidence="1">
        <name>Mg(2+)</name>
        <dbReference type="ChEBI" id="CHEBI:18420"/>
    </cofactor>
    <cofactor evidence="1">
        <name>Mn(2+)</name>
        <dbReference type="ChEBI" id="CHEBI:29035"/>
    </cofactor>
    <text evidence="1">Binds 1 Mg(2+) or Mn(2+) ion per subunit.</text>
</comment>
<comment type="subunit">
    <text evidence="1">Homodimer.</text>
</comment>
<comment type="similarity">
    <text evidence="3">Belongs to the isocitrate and isopropylmalate dehydrogenases family.</text>
</comment>
<gene>
    <name type="primary">icd</name>
    <name type="synonym">idhA</name>
</gene>
<proteinExistence type="inferred from homology"/>
<dbReference type="EC" id="1.1.1.42" evidence="1"/>
<dbReference type="EMBL" id="U37523">
    <property type="protein sequence ID" value="AAC43640.1"/>
    <property type="molecule type" value="Genomic_DNA"/>
</dbReference>
<dbReference type="PIR" id="JC4600">
    <property type="entry name" value="JC4600"/>
</dbReference>
<dbReference type="RefSeq" id="WP_004211167.1">
    <property type="nucleotide sequence ID" value="NZ_QRAL01000015.1"/>
</dbReference>
<dbReference type="SMR" id="P50215"/>
<dbReference type="STRING" id="13690.AX777_13125"/>
<dbReference type="eggNOG" id="COG0538">
    <property type="taxonomic scope" value="Bacteria"/>
</dbReference>
<dbReference type="OrthoDB" id="9765655at2"/>
<dbReference type="GO" id="GO:0004450">
    <property type="term" value="F:isocitrate dehydrogenase (NADP+) activity"/>
    <property type="evidence" value="ECO:0007669"/>
    <property type="project" value="UniProtKB-EC"/>
</dbReference>
<dbReference type="GO" id="GO:0000287">
    <property type="term" value="F:magnesium ion binding"/>
    <property type="evidence" value="ECO:0007669"/>
    <property type="project" value="InterPro"/>
</dbReference>
<dbReference type="GO" id="GO:0051287">
    <property type="term" value="F:NAD binding"/>
    <property type="evidence" value="ECO:0007669"/>
    <property type="project" value="InterPro"/>
</dbReference>
<dbReference type="GO" id="GO:0006097">
    <property type="term" value="P:glyoxylate cycle"/>
    <property type="evidence" value="ECO:0007669"/>
    <property type="project" value="UniProtKB-KW"/>
</dbReference>
<dbReference type="GO" id="GO:0006102">
    <property type="term" value="P:isocitrate metabolic process"/>
    <property type="evidence" value="ECO:0007669"/>
    <property type="project" value="InterPro"/>
</dbReference>
<dbReference type="GO" id="GO:0006099">
    <property type="term" value="P:tricarboxylic acid cycle"/>
    <property type="evidence" value="ECO:0007669"/>
    <property type="project" value="UniProtKB-KW"/>
</dbReference>
<dbReference type="FunFam" id="3.40.718.10:FF:000002">
    <property type="entry name" value="Isocitrate dehydrogenase [NADP]"/>
    <property type="match status" value="1"/>
</dbReference>
<dbReference type="Gene3D" id="3.40.718.10">
    <property type="entry name" value="Isopropylmalate Dehydrogenase"/>
    <property type="match status" value="1"/>
</dbReference>
<dbReference type="InterPro" id="IPR019818">
    <property type="entry name" value="IsoCit/isopropylmalate_DH_CS"/>
</dbReference>
<dbReference type="InterPro" id="IPR004790">
    <property type="entry name" value="Isocitrate_DH_NADP"/>
</dbReference>
<dbReference type="InterPro" id="IPR024084">
    <property type="entry name" value="IsoPropMal-DH-like_dom"/>
</dbReference>
<dbReference type="NCBIfam" id="TIGR00127">
    <property type="entry name" value="nadp_idh_euk"/>
    <property type="match status" value="1"/>
</dbReference>
<dbReference type="NCBIfam" id="NF006156">
    <property type="entry name" value="PRK08299.1"/>
    <property type="match status" value="1"/>
</dbReference>
<dbReference type="PANTHER" id="PTHR11822:SF21">
    <property type="entry name" value="ISOCITRATE DEHYDROGENASE [NADP], MITOCHONDRIAL"/>
    <property type="match status" value="1"/>
</dbReference>
<dbReference type="PANTHER" id="PTHR11822">
    <property type="entry name" value="NADP-SPECIFIC ISOCITRATE DEHYDROGENASE"/>
    <property type="match status" value="1"/>
</dbReference>
<dbReference type="Pfam" id="PF00180">
    <property type="entry name" value="Iso_dh"/>
    <property type="match status" value="1"/>
</dbReference>
<dbReference type="PIRSF" id="PIRSF000108">
    <property type="entry name" value="IDH_NADP"/>
    <property type="match status" value="1"/>
</dbReference>
<dbReference type="SMART" id="SM01329">
    <property type="entry name" value="Iso_dh"/>
    <property type="match status" value="1"/>
</dbReference>
<dbReference type="SUPFAM" id="SSF53659">
    <property type="entry name" value="Isocitrate/Isopropylmalate dehydrogenase-like"/>
    <property type="match status" value="1"/>
</dbReference>
<dbReference type="PROSITE" id="PS00470">
    <property type="entry name" value="IDH_IMDH"/>
    <property type="match status" value="1"/>
</dbReference>
<feature type="chain" id="PRO_0000083567" description="Isocitrate dehydrogenase [NADP]">
    <location>
        <begin position="1"/>
        <end position="406"/>
    </location>
</feature>
<feature type="binding site" evidence="2">
    <location>
        <position position="72"/>
    </location>
    <ligand>
        <name>NADP(+)</name>
        <dbReference type="ChEBI" id="CHEBI:58349"/>
    </ligand>
</feature>
<feature type="binding site" evidence="2">
    <location>
        <position position="75"/>
    </location>
    <ligand>
        <name>NADP(+)</name>
        <dbReference type="ChEBI" id="CHEBI:58349"/>
    </ligand>
</feature>
<feature type="binding site" evidence="2">
    <location>
        <position position="77"/>
    </location>
    <ligand>
        <name>NADP(+)</name>
        <dbReference type="ChEBI" id="CHEBI:58349"/>
    </ligand>
</feature>
<feature type="binding site" evidence="2">
    <location>
        <position position="82"/>
    </location>
    <ligand>
        <name>NADP(+)</name>
        <dbReference type="ChEBI" id="CHEBI:58349"/>
    </ligand>
</feature>
<feature type="binding site" evidence="1">
    <location>
        <position position="94"/>
    </location>
    <ligand>
        <name>D-threo-isocitrate</name>
        <dbReference type="ChEBI" id="CHEBI:15562"/>
    </ligand>
</feature>
<feature type="binding site" evidence="1">
    <location>
        <position position="96"/>
    </location>
    <ligand>
        <name>D-threo-isocitrate</name>
        <dbReference type="ChEBI" id="CHEBI:15562"/>
    </ligand>
</feature>
<feature type="binding site" evidence="1">
    <location>
        <position position="100"/>
    </location>
    <ligand>
        <name>D-threo-isocitrate</name>
        <dbReference type="ChEBI" id="CHEBI:15562"/>
    </ligand>
</feature>
<feature type="binding site" evidence="1">
    <location>
        <position position="110"/>
    </location>
    <ligand>
        <name>D-threo-isocitrate</name>
        <dbReference type="ChEBI" id="CHEBI:15562"/>
    </ligand>
</feature>
<feature type="binding site" evidence="1">
    <location>
        <position position="132"/>
    </location>
    <ligand>
        <name>D-threo-isocitrate</name>
        <dbReference type="ChEBI" id="CHEBI:15562"/>
    </ligand>
</feature>
<feature type="binding site" evidence="2">
    <location>
        <position position="250"/>
    </location>
    <ligand>
        <name>Mn(2+)</name>
        <dbReference type="ChEBI" id="CHEBI:29035"/>
    </ligand>
</feature>
<feature type="binding site" evidence="2">
    <location>
        <position position="273"/>
    </location>
    <ligand>
        <name>Mn(2+)</name>
        <dbReference type="ChEBI" id="CHEBI:29035"/>
    </ligand>
</feature>
<feature type="binding site" evidence="2">
    <location>
        <position position="277"/>
    </location>
    <ligand>
        <name>Mn(2+)</name>
        <dbReference type="ChEBI" id="CHEBI:29035"/>
    </ligand>
</feature>
<feature type="binding site" evidence="2">
    <location>
        <position position="308"/>
    </location>
    <ligand>
        <name>NADP(+)</name>
        <dbReference type="ChEBI" id="CHEBI:58349"/>
    </ligand>
</feature>
<feature type="binding site" evidence="2">
    <location>
        <position position="309"/>
    </location>
    <ligand>
        <name>NADP(+)</name>
        <dbReference type="ChEBI" id="CHEBI:58349"/>
    </ligand>
</feature>
<feature type="binding site" evidence="2">
    <location>
        <position position="310"/>
    </location>
    <ligand>
        <name>NADP(+)</name>
        <dbReference type="ChEBI" id="CHEBI:58349"/>
    </ligand>
</feature>
<feature type="binding site" evidence="2">
    <location>
        <position position="313"/>
    </location>
    <ligand>
        <name>NADP(+)</name>
        <dbReference type="ChEBI" id="CHEBI:58349"/>
    </ligand>
</feature>
<feature type="binding site" evidence="2">
    <location>
        <position position="326"/>
    </location>
    <ligand>
        <name>NADP(+)</name>
        <dbReference type="ChEBI" id="CHEBI:58349"/>
    </ligand>
</feature>
<feature type="site" description="Critical for catalysis" evidence="1">
    <location>
        <position position="139"/>
    </location>
</feature>
<feature type="site" description="Critical for catalysis" evidence="1">
    <location>
        <position position="210"/>
    </location>
</feature>